<dbReference type="EMBL" id="BC147998">
    <property type="protein sequence ID" value="AAI47999.1"/>
    <property type="molecule type" value="mRNA"/>
</dbReference>
<dbReference type="RefSeq" id="NP_001095643.1">
    <property type="nucleotide sequence ID" value="NM_001102173.1"/>
</dbReference>
<dbReference type="RefSeq" id="XP_010814339.1">
    <property type="nucleotide sequence ID" value="XM_010816037.2"/>
</dbReference>
<dbReference type="SMR" id="A6QLK6"/>
<dbReference type="FunCoup" id="A6QLK6">
    <property type="interactions" value="216"/>
</dbReference>
<dbReference type="STRING" id="9913.ENSBTAP00000041340"/>
<dbReference type="PaxDb" id="9913-ENSBTAP00000041340"/>
<dbReference type="Ensembl" id="ENSBTAT00000043796.5">
    <property type="protein sequence ID" value="ENSBTAP00000041340.3"/>
    <property type="gene ID" value="ENSBTAG00000003707.6"/>
</dbReference>
<dbReference type="GeneID" id="534491"/>
<dbReference type="KEGG" id="bta:534491"/>
<dbReference type="CTD" id="10750"/>
<dbReference type="VEuPathDB" id="HostDB:ENSBTAG00000003707"/>
<dbReference type="eggNOG" id="KOG3601">
    <property type="taxonomic scope" value="Eukaryota"/>
</dbReference>
<dbReference type="GeneTree" id="ENSGT00940000156254"/>
<dbReference type="HOGENOM" id="CLU_073617_1_0_1"/>
<dbReference type="InParanoid" id="A6QLK6"/>
<dbReference type="OMA" id="NKGDMLK"/>
<dbReference type="OrthoDB" id="10255964at2759"/>
<dbReference type="TreeFam" id="TF354288"/>
<dbReference type="Reactome" id="R-BTA-1433557">
    <property type="pathway name" value="Signaling by SCF-KIT"/>
</dbReference>
<dbReference type="Proteomes" id="UP000009136">
    <property type="component" value="Chromosome 19"/>
</dbReference>
<dbReference type="Bgee" id="ENSBTAG00000003707">
    <property type="expression patterns" value="Expressed in nasopharynx and 100 other cell types or tissues"/>
</dbReference>
<dbReference type="GO" id="GO:0008180">
    <property type="term" value="C:COP9 signalosome"/>
    <property type="evidence" value="ECO:0000318"/>
    <property type="project" value="GO_Central"/>
</dbReference>
<dbReference type="GO" id="GO:0005737">
    <property type="term" value="C:cytoplasm"/>
    <property type="evidence" value="ECO:0000318"/>
    <property type="project" value="GO_Central"/>
</dbReference>
<dbReference type="GO" id="GO:0005654">
    <property type="term" value="C:nucleoplasm"/>
    <property type="evidence" value="ECO:0000318"/>
    <property type="project" value="GO_Central"/>
</dbReference>
<dbReference type="GO" id="GO:0005886">
    <property type="term" value="C:plasma membrane"/>
    <property type="evidence" value="ECO:0000318"/>
    <property type="project" value="GO_Central"/>
</dbReference>
<dbReference type="GO" id="GO:0098793">
    <property type="term" value="C:presynapse"/>
    <property type="evidence" value="ECO:0000250"/>
    <property type="project" value="UniProtKB"/>
</dbReference>
<dbReference type="GO" id="GO:0005154">
    <property type="term" value="F:epidermal growth factor receptor binding"/>
    <property type="evidence" value="ECO:0000318"/>
    <property type="project" value="GO_Central"/>
</dbReference>
<dbReference type="GO" id="GO:0001784">
    <property type="term" value="F:phosphotyrosine residue binding"/>
    <property type="evidence" value="ECO:0000318"/>
    <property type="project" value="GO_Central"/>
</dbReference>
<dbReference type="GO" id="GO:0043408">
    <property type="term" value="P:regulation of MAPK cascade"/>
    <property type="evidence" value="ECO:0000318"/>
    <property type="project" value="GO_Central"/>
</dbReference>
<dbReference type="GO" id="GO:0007605">
    <property type="term" value="P:sensory perception of sound"/>
    <property type="evidence" value="ECO:0000250"/>
    <property type="project" value="UniProtKB"/>
</dbReference>
<dbReference type="GO" id="GO:0007165">
    <property type="term" value="P:signal transduction"/>
    <property type="evidence" value="ECO:0000318"/>
    <property type="project" value="GO_Central"/>
</dbReference>
<dbReference type="CDD" id="cd09941">
    <property type="entry name" value="SH2_Grb2_like"/>
    <property type="match status" value="1"/>
</dbReference>
<dbReference type="CDD" id="cd11948">
    <property type="entry name" value="SH3_GRAP_N"/>
    <property type="match status" value="1"/>
</dbReference>
<dbReference type="FunFam" id="2.30.30.40:FF:000076">
    <property type="entry name" value="Growth factor receptor-bound protein 2"/>
    <property type="match status" value="1"/>
</dbReference>
<dbReference type="FunFam" id="3.30.505.10:FF:000022">
    <property type="entry name" value="Growth factor receptor-bound protein 2"/>
    <property type="match status" value="1"/>
</dbReference>
<dbReference type="FunFam" id="2.30.30.40:FF:000072">
    <property type="entry name" value="Unconventional Myosin IB"/>
    <property type="match status" value="1"/>
</dbReference>
<dbReference type="Gene3D" id="3.30.505.10">
    <property type="entry name" value="SH2 domain"/>
    <property type="match status" value="1"/>
</dbReference>
<dbReference type="Gene3D" id="2.30.30.40">
    <property type="entry name" value="SH3 Domains"/>
    <property type="match status" value="2"/>
</dbReference>
<dbReference type="InterPro" id="IPR035645">
    <property type="entry name" value="GRAP_N_SH3"/>
</dbReference>
<dbReference type="InterPro" id="IPR043539">
    <property type="entry name" value="Grb2-like"/>
</dbReference>
<dbReference type="InterPro" id="IPR000980">
    <property type="entry name" value="SH2"/>
</dbReference>
<dbReference type="InterPro" id="IPR036860">
    <property type="entry name" value="SH2_dom_sf"/>
</dbReference>
<dbReference type="InterPro" id="IPR036028">
    <property type="entry name" value="SH3-like_dom_sf"/>
</dbReference>
<dbReference type="InterPro" id="IPR001452">
    <property type="entry name" value="SH3_domain"/>
</dbReference>
<dbReference type="PANTHER" id="PTHR46037">
    <property type="entry name" value="PROTEIN ENHANCER OF SEVENLESS 2B"/>
    <property type="match status" value="1"/>
</dbReference>
<dbReference type="Pfam" id="PF00017">
    <property type="entry name" value="SH2"/>
    <property type="match status" value="1"/>
</dbReference>
<dbReference type="Pfam" id="PF00018">
    <property type="entry name" value="SH3_1"/>
    <property type="match status" value="2"/>
</dbReference>
<dbReference type="PRINTS" id="PR00499">
    <property type="entry name" value="P67PHOX"/>
</dbReference>
<dbReference type="PRINTS" id="PR00401">
    <property type="entry name" value="SH2DOMAIN"/>
</dbReference>
<dbReference type="PRINTS" id="PR00452">
    <property type="entry name" value="SH3DOMAIN"/>
</dbReference>
<dbReference type="SMART" id="SM00252">
    <property type="entry name" value="SH2"/>
    <property type="match status" value="1"/>
</dbReference>
<dbReference type="SMART" id="SM00326">
    <property type="entry name" value="SH3"/>
    <property type="match status" value="2"/>
</dbReference>
<dbReference type="SUPFAM" id="SSF55550">
    <property type="entry name" value="SH2 domain"/>
    <property type="match status" value="1"/>
</dbReference>
<dbReference type="SUPFAM" id="SSF50044">
    <property type="entry name" value="SH3-domain"/>
    <property type="match status" value="2"/>
</dbReference>
<dbReference type="PROSITE" id="PS50001">
    <property type="entry name" value="SH2"/>
    <property type="match status" value="1"/>
</dbReference>
<dbReference type="PROSITE" id="PS50002">
    <property type="entry name" value="SH3"/>
    <property type="match status" value="2"/>
</dbReference>
<gene>
    <name type="primary">GRAP</name>
</gene>
<name>GRAP_BOVIN</name>
<protein>
    <recommendedName>
        <fullName>GRB2-related adapter protein</fullName>
    </recommendedName>
</protein>
<accession>A6QLK6</accession>
<organism>
    <name type="scientific">Bos taurus</name>
    <name type="common">Bovine</name>
    <dbReference type="NCBI Taxonomy" id="9913"/>
    <lineage>
        <taxon>Eukaryota</taxon>
        <taxon>Metazoa</taxon>
        <taxon>Chordata</taxon>
        <taxon>Craniata</taxon>
        <taxon>Vertebrata</taxon>
        <taxon>Euteleostomi</taxon>
        <taxon>Mammalia</taxon>
        <taxon>Eutheria</taxon>
        <taxon>Laurasiatheria</taxon>
        <taxon>Artiodactyla</taxon>
        <taxon>Ruminantia</taxon>
        <taxon>Pecora</taxon>
        <taxon>Bovidae</taxon>
        <taxon>Bovinae</taxon>
        <taxon>Bos</taxon>
    </lineage>
</organism>
<sequence>MESVALYSFQATESDELAFNKGDTLKILNMEDDQNWYKAELRGAEGFVPKNYIRLKPHPWYSGRISRQLAEEILMKRNHQGAFLIRESESSPGEFSVSVNYGDQVQHFKVLRDPSGKYYLWEEKFNSLNELVAFYRTTTIAKKRQVFLQDEEPLPKPPRACFAQAQFDFSAQDPSQLSFRRGDIIEVLERLDPSWWRGRLSGRIGFFPRSYVQPVHM</sequence>
<proteinExistence type="evidence at transcript level"/>
<comment type="function">
    <text evidence="2">Couples signals from receptor and cytoplasmic tyrosine kinases to the Ras signaling pathway. Plays a role in the inner ear and in hearing.</text>
</comment>
<comment type="subunit">
    <text evidence="2">Associates through its SH2 domain with ligand-activated receptors for stem cell factor (KIT) and erythropoietin (EPOR). Also forms a stable complex with the Bcr-Abl oncoprotein. GRAP is associated with the Ras guanine nucleotide exchange factor SOS1, primarily through its N-terminal SH3 domain. Interacts with phosphorylated LAT upon TCR activation. Interacts with SHB (By similarity).</text>
</comment>
<comment type="subcellular location">
    <subcellularLocation>
        <location evidence="1">Membrane</location>
        <topology evidence="1">Peripheral membrane protein</topology>
    </subcellularLocation>
    <subcellularLocation>
        <location evidence="1">Synapse</location>
    </subcellularLocation>
    <text evidence="1">Localizes at the presynaptic terminal.</text>
</comment>
<comment type="similarity">
    <text evidence="5">Belongs to the GRB2/sem-5/DRK family.</text>
</comment>
<reference key="1">
    <citation type="submission" date="2007-06" db="EMBL/GenBank/DDBJ databases">
        <authorList>
            <consortium name="NIH - Mammalian Gene Collection (MGC) project"/>
        </authorList>
    </citation>
    <scope>NUCLEOTIDE SEQUENCE [LARGE SCALE MRNA]</scope>
    <source>
        <strain>Hereford</strain>
        <tissue>Basal ganglia</tissue>
    </source>
</reference>
<evidence type="ECO:0000250" key="1">
    <source>
        <dbReference type="UniProtKB" id="Q08012"/>
    </source>
</evidence>
<evidence type="ECO:0000250" key="2">
    <source>
        <dbReference type="UniProtKB" id="Q13588"/>
    </source>
</evidence>
<evidence type="ECO:0000255" key="3">
    <source>
        <dbReference type="PROSITE-ProRule" id="PRU00191"/>
    </source>
</evidence>
<evidence type="ECO:0000255" key="4">
    <source>
        <dbReference type="PROSITE-ProRule" id="PRU00192"/>
    </source>
</evidence>
<evidence type="ECO:0000305" key="5"/>
<keyword id="KW-0472">Membrane</keyword>
<keyword id="KW-1185">Reference proteome</keyword>
<keyword id="KW-0677">Repeat</keyword>
<keyword id="KW-0727">SH2 domain</keyword>
<keyword id="KW-0728">SH3 domain</keyword>
<keyword id="KW-0770">Synapse</keyword>
<feature type="chain" id="PRO_0000344237" description="GRB2-related adapter protein">
    <location>
        <begin position="1"/>
        <end position="217"/>
    </location>
</feature>
<feature type="domain" description="SH3 1" evidence="4">
    <location>
        <begin position="1"/>
        <end position="58"/>
    </location>
</feature>
<feature type="domain" description="SH2" evidence="3">
    <location>
        <begin position="60"/>
        <end position="152"/>
    </location>
</feature>
<feature type="domain" description="SH3 2" evidence="4">
    <location>
        <begin position="158"/>
        <end position="217"/>
    </location>
</feature>